<proteinExistence type="inferred from homology"/>
<sequence length="96" mass="10117">MNRWLAAGGILLGALVVFSFVSAGAWGGADGVAGDTITTINPSYEPWFQSLWTPPSGEIESLLFSIQAAVGGIIIGYYLGRDRPRGQSQDMGSDLP</sequence>
<keyword id="KW-1003">Cell membrane</keyword>
<keyword id="KW-0169">Cobalamin biosynthesis</keyword>
<keyword id="KW-0170">Cobalt</keyword>
<keyword id="KW-0171">Cobalt transport</keyword>
<keyword id="KW-0406">Ion transport</keyword>
<keyword id="KW-0472">Membrane</keyword>
<keyword id="KW-0812">Transmembrane</keyword>
<keyword id="KW-1133">Transmembrane helix</keyword>
<keyword id="KW-0813">Transport</keyword>
<feature type="chain" id="PRO_1000116106" description="Cobalt transport protein CbiN">
    <location>
        <begin position="1"/>
        <end position="96"/>
    </location>
</feature>
<feature type="transmembrane region" description="Helical" evidence="1">
    <location>
        <begin position="4"/>
        <end position="24"/>
    </location>
</feature>
<feature type="transmembrane region" description="Helical" evidence="1">
    <location>
        <begin position="59"/>
        <end position="79"/>
    </location>
</feature>
<organism>
    <name type="scientific">Halobacterium salinarum (strain ATCC 29341 / DSM 671 / R1)</name>
    <dbReference type="NCBI Taxonomy" id="478009"/>
    <lineage>
        <taxon>Archaea</taxon>
        <taxon>Methanobacteriati</taxon>
        <taxon>Methanobacteriota</taxon>
        <taxon>Stenosarchaea group</taxon>
        <taxon>Halobacteria</taxon>
        <taxon>Halobacteriales</taxon>
        <taxon>Halobacteriaceae</taxon>
        <taxon>Halobacterium</taxon>
        <taxon>Halobacterium salinarum NRC-34001</taxon>
    </lineage>
</organism>
<dbReference type="EMBL" id="AM774415">
    <property type="protein sequence ID" value="CAP14179.1"/>
    <property type="molecule type" value="Genomic_DNA"/>
</dbReference>
<dbReference type="RefSeq" id="WP_010903190.1">
    <property type="nucleotide sequence ID" value="NC_010364.1"/>
</dbReference>
<dbReference type="EnsemblBacteria" id="CAP14179">
    <property type="protein sequence ID" value="CAP14179"/>
    <property type="gene ID" value="OE_3318R"/>
</dbReference>
<dbReference type="KEGG" id="hsl:OE_3318R"/>
<dbReference type="HOGENOM" id="CLU_136197_2_0_2"/>
<dbReference type="PhylomeDB" id="B0R610"/>
<dbReference type="UniPathway" id="UPA00148"/>
<dbReference type="Proteomes" id="UP000001321">
    <property type="component" value="Chromosome"/>
</dbReference>
<dbReference type="GO" id="GO:0005886">
    <property type="term" value="C:plasma membrane"/>
    <property type="evidence" value="ECO:0007669"/>
    <property type="project" value="UniProtKB-SubCell"/>
</dbReference>
<dbReference type="GO" id="GO:0015087">
    <property type="term" value="F:cobalt ion transmembrane transporter activity"/>
    <property type="evidence" value="ECO:0007669"/>
    <property type="project" value="UniProtKB-UniRule"/>
</dbReference>
<dbReference type="GO" id="GO:0009236">
    <property type="term" value="P:cobalamin biosynthetic process"/>
    <property type="evidence" value="ECO:0007669"/>
    <property type="project" value="UniProtKB-UniRule"/>
</dbReference>
<dbReference type="HAMAP" id="MF_00330">
    <property type="entry name" value="CbiN"/>
    <property type="match status" value="1"/>
</dbReference>
<dbReference type="InterPro" id="IPR003705">
    <property type="entry name" value="CbiN"/>
</dbReference>
<dbReference type="NCBIfam" id="NF002780">
    <property type="entry name" value="PRK02898.1"/>
    <property type="match status" value="1"/>
</dbReference>
<dbReference type="PANTHER" id="PTHR38662">
    <property type="entry name" value="COBALT TRANSPORT PROTEIN CBIN"/>
    <property type="match status" value="1"/>
</dbReference>
<dbReference type="PANTHER" id="PTHR38662:SF1">
    <property type="entry name" value="COBALT TRANSPORT PROTEIN CBIN"/>
    <property type="match status" value="1"/>
</dbReference>
<dbReference type="Pfam" id="PF02553">
    <property type="entry name" value="CbiN"/>
    <property type="match status" value="1"/>
</dbReference>
<evidence type="ECO:0000255" key="1">
    <source>
        <dbReference type="HAMAP-Rule" id="MF_00330"/>
    </source>
</evidence>
<accession>B0R610</accession>
<protein>
    <recommendedName>
        <fullName evidence="1">Cobalt transport protein CbiN</fullName>
    </recommendedName>
    <alternativeName>
        <fullName evidence="1">Energy-coupling factor transporter probable substrate-capture protein CbiN</fullName>
        <shortName evidence="1">ECF transporter S component CbiN</shortName>
    </alternativeName>
</protein>
<reference key="1">
    <citation type="journal article" date="2008" name="Genomics">
        <title>Evolution in the laboratory: the genome of Halobacterium salinarum strain R1 compared to that of strain NRC-1.</title>
        <authorList>
            <person name="Pfeiffer F."/>
            <person name="Schuster S.C."/>
            <person name="Broicher A."/>
            <person name="Falb M."/>
            <person name="Palm P."/>
            <person name="Rodewald K."/>
            <person name="Ruepp A."/>
            <person name="Soppa J."/>
            <person name="Tittor J."/>
            <person name="Oesterhelt D."/>
        </authorList>
    </citation>
    <scope>NUCLEOTIDE SEQUENCE [LARGE SCALE GENOMIC DNA]</scope>
    <source>
        <strain>ATCC 29341 / DSM 671 / R1</strain>
    </source>
</reference>
<comment type="function">
    <text evidence="1">Part of the energy-coupling factor (ECF) transporter complex CbiMNOQ involved in cobalt import.</text>
</comment>
<comment type="pathway">
    <text evidence="1">Cofactor biosynthesis; adenosylcobalamin biosynthesis.</text>
</comment>
<comment type="subunit">
    <text evidence="1">Forms an energy-coupling factor (ECF) transporter complex composed of an ATP-binding protein (A component, CbiO), a transmembrane protein (T component, CbiQ) and 2 possible substrate-capture proteins (S components, CbiM and CbiN) of unknown stoichimetry.</text>
</comment>
<comment type="subcellular location">
    <subcellularLocation>
        <location evidence="1">Cell membrane</location>
        <topology evidence="1">Multi-pass membrane protein</topology>
    </subcellularLocation>
</comment>
<comment type="similarity">
    <text evidence="1">Belongs to the CbiN family.</text>
</comment>
<gene>
    <name evidence="1" type="primary">cbiN</name>
    <name type="ordered locus">OE_3318R</name>
</gene>
<name>CBIN_HALS3</name>